<protein>
    <recommendedName>
        <fullName evidence="1">Urocanate hydratase</fullName>
        <shortName evidence="1">Urocanase</shortName>
        <ecNumber evidence="1">4.2.1.49</ecNumber>
    </recommendedName>
    <alternativeName>
        <fullName evidence="1">Imidazolonepropionate hydrolase</fullName>
    </alternativeName>
</protein>
<gene>
    <name evidence="1" type="primary">hutU</name>
    <name type="ordered locus">YPDSF_3760</name>
</gene>
<sequence>MTTQNRFRDNEIRAPQGTQLTAKSWLTEAALRMLMNNLDPDVAENPKELVVYGGIGRAARNWECYDKIVESLINLNDDETLLIQSGKPVGIFKTHSNAPRVLIANSNLVPHWANWEHFNELDAKGLAMYGQMTAGSWIYIGSQGIVQGTYETFVEAGRQHFGGSLKGRWVLTAGLGGMGGAQPLAATLAGACSLNIECQQSRIDFRLKTRYVDEQATDLDDALARIEKYTATGVAVSIALCGNAAEILPELVRRGVRPDMVTDQTSAHDPLNGYLPKGWNWEEYRQRAQHEPALVINAAKISMAEHVEAMLAFHNMGIPTFDYGNNIRQMAHDMGVIRAFDFPGFVPAYIRPLFCRGIGPFRWVALSGNPDDIYKTDAKVKALIPDDAHLHHWLDMARERIRFQGLPARICWVGLGQRAKLGLAFNEMVRSGELSAPVVIGRDHLDSGSVASPNRETEAMQDGSDAVSDWPLLNALLNTASGATWVSLHHGGGVGMGFSQHSGMVVVCDGSDEAAERIARVLHNDPATGVMRHADAGYDIAVNCAQEQGLNLPMVAATQGKKS</sequence>
<keyword id="KW-0963">Cytoplasm</keyword>
<keyword id="KW-0369">Histidine metabolism</keyword>
<keyword id="KW-0456">Lyase</keyword>
<keyword id="KW-0520">NAD</keyword>
<dbReference type="EC" id="4.2.1.49" evidence="1"/>
<dbReference type="EMBL" id="CP000668">
    <property type="protein sequence ID" value="ABP42106.1"/>
    <property type="molecule type" value="Genomic_DNA"/>
</dbReference>
<dbReference type="RefSeq" id="WP_002209576.1">
    <property type="nucleotide sequence ID" value="NZ_CP009715.1"/>
</dbReference>
<dbReference type="SMR" id="A4TS44"/>
<dbReference type="GeneID" id="57974694"/>
<dbReference type="KEGG" id="ypp:YPDSF_3760"/>
<dbReference type="PATRIC" id="fig|386656.14.peg.763"/>
<dbReference type="UniPathway" id="UPA00379">
    <property type="reaction ID" value="UER00550"/>
</dbReference>
<dbReference type="GO" id="GO:0005737">
    <property type="term" value="C:cytoplasm"/>
    <property type="evidence" value="ECO:0007669"/>
    <property type="project" value="UniProtKB-SubCell"/>
</dbReference>
<dbReference type="GO" id="GO:0016153">
    <property type="term" value="F:urocanate hydratase activity"/>
    <property type="evidence" value="ECO:0007669"/>
    <property type="project" value="UniProtKB-UniRule"/>
</dbReference>
<dbReference type="GO" id="GO:0019556">
    <property type="term" value="P:L-histidine catabolic process to glutamate and formamide"/>
    <property type="evidence" value="ECO:0007669"/>
    <property type="project" value="UniProtKB-UniPathway"/>
</dbReference>
<dbReference type="GO" id="GO:0019557">
    <property type="term" value="P:L-histidine catabolic process to glutamate and formate"/>
    <property type="evidence" value="ECO:0007669"/>
    <property type="project" value="UniProtKB-UniPathway"/>
</dbReference>
<dbReference type="FunFam" id="3.40.50.10730:FF:000001">
    <property type="entry name" value="Urocanate hydratase"/>
    <property type="match status" value="1"/>
</dbReference>
<dbReference type="Gene3D" id="3.40.50.10730">
    <property type="entry name" value="Urocanase like domains"/>
    <property type="match status" value="1"/>
</dbReference>
<dbReference type="Gene3D" id="3.40.1770.10">
    <property type="entry name" value="Urocanase superfamily"/>
    <property type="match status" value="1"/>
</dbReference>
<dbReference type="HAMAP" id="MF_00577">
    <property type="entry name" value="HutU"/>
    <property type="match status" value="1"/>
</dbReference>
<dbReference type="InterPro" id="IPR055351">
    <property type="entry name" value="Urocanase"/>
</dbReference>
<dbReference type="InterPro" id="IPR023637">
    <property type="entry name" value="Urocanase-like"/>
</dbReference>
<dbReference type="InterPro" id="IPR035401">
    <property type="entry name" value="Urocanase_C"/>
</dbReference>
<dbReference type="InterPro" id="IPR038364">
    <property type="entry name" value="Urocanase_central_sf"/>
</dbReference>
<dbReference type="InterPro" id="IPR023636">
    <property type="entry name" value="Urocanase_CS"/>
</dbReference>
<dbReference type="InterPro" id="IPR035400">
    <property type="entry name" value="Urocanase_N"/>
</dbReference>
<dbReference type="InterPro" id="IPR035085">
    <property type="entry name" value="Urocanase_Rossmann-like"/>
</dbReference>
<dbReference type="InterPro" id="IPR036190">
    <property type="entry name" value="Urocanase_sf"/>
</dbReference>
<dbReference type="NCBIfam" id="TIGR01228">
    <property type="entry name" value="hutU"/>
    <property type="match status" value="1"/>
</dbReference>
<dbReference type="NCBIfam" id="NF003820">
    <property type="entry name" value="PRK05414.1"/>
    <property type="match status" value="1"/>
</dbReference>
<dbReference type="PANTHER" id="PTHR12216">
    <property type="entry name" value="UROCANATE HYDRATASE"/>
    <property type="match status" value="1"/>
</dbReference>
<dbReference type="PANTHER" id="PTHR12216:SF4">
    <property type="entry name" value="UROCANATE HYDRATASE"/>
    <property type="match status" value="1"/>
</dbReference>
<dbReference type="Pfam" id="PF01175">
    <property type="entry name" value="Urocanase"/>
    <property type="match status" value="1"/>
</dbReference>
<dbReference type="Pfam" id="PF17392">
    <property type="entry name" value="Urocanase_C"/>
    <property type="match status" value="1"/>
</dbReference>
<dbReference type="Pfam" id="PF17391">
    <property type="entry name" value="Urocanase_N"/>
    <property type="match status" value="1"/>
</dbReference>
<dbReference type="PIRSF" id="PIRSF001423">
    <property type="entry name" value="Urocanate_hydrat"/>
    <property type="match status" value="1"/>
</dbReference>
<dbReference type="SUPFAM" id="SSF111326">
    <property type="entry name" value="Urocanase"/>
    <property type="match status" value="1"/>
</dbReference>
<dbReference type="PROSITE" id="PS01233">
    <property type="entry name" value="UROCANASE"/>
    <property type="match status" value="1"/>
</dbReference>
<reference key="1">
    <citation type="submission" date="2007-02" db="EMBL/GenBank/DDBJ databases">
        <title>Complete sequence of chromosome of Yersinia pestis Pestoides F.</title>
        <authorList>
            <consortium name="US DOE Joint Genome Institute"/>
            <person name="Copeland A."/>
            <person name="Lucas S."/>
            <person name="Lapidus A."/>
            <person name="Barry K."/>
            <person name="Detter J.C."/>
            <person name="Glavina del Rio T."/>
            <person name="Hammon N."/>
            <person name="Israni S."/>
            <person name="Dalin E."/>
            <person name="Tice H."/>
            <person name="Pitluck S."/>
            <person name="Di Bartolo G."/>
            <person name="Chain P."/>
            <person name="Malfatti S."/>
            <person name="Shin M."/>
            <person name="Vergez L."/>
            <person name="Schmutz J."/>
            <person name="Larimer F."/>
            <person name="Land M."/>
            <person name="Hauser L."/>
            <person name="Worsham P."/>
            <person name="Chu M."/>
            <person name="Bearden S."/>
            <person name="Garcia E."/>
            <person name="Richardson P."/>
        </authorList>
    </citation>
    <scope>NUCLEOTIDE SEQUENCE [LARGE SCALE GENOMIC DNA]</scope>
    <source>
        <strain>Pestoides F</strain>
    </source>
</reference>
<name>HUTU_YERPP</name>
<proteinExistence type="inferred from homology"/>
<accession>A4TS44</accession>
<comment type="function">
    <text evidence="1">Catalyzes the conversion of urocanate to 4-imidazolone-5-propionate.</text>
</comment>
<comment type="catalytic activity">
    <reaction evidence="1">
        <text>4-imidazolone-5-propanoate = trans-urocanate + H2O</text>
        <dbReference type="Rhea" id="RHEA:13101"/>
        <dbReference type="ChEBI" id="CHEBI:15377"/>
        <dbReference type="ChEBI" id="CHEBI:17771"/>
        <dbReference type="ChEBI" id="CHEBI:77893"/>
        <dbReference type="EC" id="4.2.1.49"/>
    </reaction>
</comment>
<comment type="cofactor">
    <cofactor evidence="1">
        <name>NAD(+)</name>
        <dbReference type="ChEBI" id="CHEBI:57540"/>
    </cofactor>
    <text evidence="1">Binds 1 NAD(+) per subunit.</text>
</comment>
<comment type="pathway">
    <text evidence="1">Amino-acid degradation; L-histidine degradation into L-glutamate; N-formimidoyl-L-glutamate from L-histidine: step 2/3.</text>
</comment>
<comment type="subcellular location">
    <subcellularLocation>
        <location evidence="1">Cytoplasm</location>
    </subcellularLocation>
</comment>
<comment type="similarity">
    <text evidence="1">Belongs to the urocanase family.</text>
</comment>
<evidence type="ECO:0000255" key="1">
    <source>
        <dbReference type="HAMAP-Rule" id="MF_00577"/>
    </source>
</evidence>
<feature type="chain" id="PRO_1000025165" description="Urocanate hydratase">
    <location>
        <begin position="1"/>
        <end position="563"/>
    </location>
</feature>
<feature type="active site" evidence="1">
    <location>
        <position position="411"/>
    </location>
</feature>
<feature type="binding site" evidence="1">
    <location>
        <begin position="53"/>
        <end position="54"/>
    </location>
    <ligand>
        <name>NAD(+)</name>
        <dbReference type="ChEBI" id="CHEBI:57540"/>
    </ligand>
</feature>
<feature type="binding site" evidence="1">
    <location>
        <position position="131"/>
    </location>
    <ligand>
        <name>NAD(+)</name>
        <dbReference type="ChEBI" id="CHEBI:57540"/>
    </ligand>
</feature>
<feature type="binding site" evidence="1">
    <location>
        <begin position="177"/>
        <end position="179"/>
    </location>
    <ligand>
        <name>NAD(+)</name>
        <dbReference type="ChEBI" id="CHEBI:57540"/>
    </ligand>
</feature>
<feature type="binding site" evidence="1">
    <location>
        <position position="197"/>
    </location>
    <ligand>
        <name>NAD(+)</name>
        <dbReference type="ChEBI" id="CHEBI:57540"/>
    </ligand>
</feature>
<feature type="binding site" evidence="1">
    <location>
        <position position="202"/>
    </location>
    <ligand>
        <name>NAD(+)</name>
        <dbReference type="ChEBI" id="CHEBI:57540"/>
    </ligand>
</feature>
<feature type="binding site" evidence="1">
    <location>
        <begin position="243"/>
        <end position="244"/>
    </location>
    <ligand>
        <name>NAD(+)</name>
        <dbReference type="ChEBI" id="CHEBI:57540"/>
    </ligand>
</feature>
<feature type="binding site" evidence="1">
    <location>
        <begin position="264"/>
        <end position="268"/>
    </location>
    <ligand>
        <name>NAD(+)</name>
        <dbReference type="ChEBI" id="CHEBI:57540"/>
    </ligand>
</feature>
<feature type="binding site" evidence="1">
    <location>
        <begin position="274"/>
        <end position="275"/>
    </location>
    <ligand>
        <name>NAD(+)</name>
        <dbReference type="ChEBI" id="CHEBI:57540"/>
    </ligand>
</feature>
<feature type="binding site" evidence="1">
    <location>
        <position position="323"/>
    </location>
    <ligand>
        <name>NAD(+)</name>
        <dbReference type="ChEBI" id="CHEBI:57540"/>
    </ligand>
</feature>
<feature type="binding site" evidence="1">
    <location>
        <position position="493"/>
    </location>
    <ligand>
        <name>NAD(+)</name>
        <dbReference type="ChEBI" id="CHEBI:57540"/>
    </ligand>
</feature>
<organism>
    <name type="scientific">Yersinia pestis (strain Pestoides F)</name>
    <dbReference type="NCBI Taxonomy" id="386656"/>
    <lineage>
        <taxon>Bacteria</taxon>
        <taxon>Pseudomonadati</taxon>
        <taxon>Pseudomonadota</taxon>
        <taxon>Gammaproteobacteria</taxon>
        <taxon>Enterobacterales</taxon>
        <taxon>Yersiniaceae</taxon>
        <taxon>Yersinia</taxon>
    </lineage>
</organism>